<proteinExistence type="inferred from homology"/>
<organism>
    <name type="scientific">Borrelia hermsii (strain HS1 / DAH)</name>
    <dbReference type="NCBI Taxonomy" id="314723"/>
    <lineage>
        <taxon>Bacteria</taxon>
        <taxon>Pseudomonadati</taxon>
        <taxon>Spirochaetota</taxon>
        <taxon>Spirochaetia</taxon>
        <taxon>Spirochaetales</taxon>
        <taxon>Borreliaceae</taxon>
        <taxon>Borrelia</taxon>
    </lineage>
</organism>
<accession>B2S1H8</accession>
<protein>
    <recommendedName>
        <fullName evidence="1">Isoleucine--tRNA ligase</fullName>
        <ecNumber evidence="1">6.1.1.5</ecNumber>
    </recommendedName>
    <alternativeName>
        <fullName evidence="1">Isoleucyl-tRNA synthetase</fullName>
        <shortName evidence="1">IleRS</shortName>
    </alternativeName>
</protein>
<sequence>MFKKVESKVNFPKIEEKVLKFWNDNKIFEKSMQQREGCEEFTFYDGPPFATGLPHFGHFVPNTIKDIIPRYKTMKGKHVKRYFGWDTHGLPVEYEVEKSLQISGRYEIEKYGVDKFNEECKNIVLRYTKEWQKTISRLGRWVDFEHNYKTMDTTFMESVWWVFQTLYNKGLIYESYYVLPYSPKLATPLSNFEVNLGEYKEVHDPSLTIKFKIKDKNEYLLAWTTTPWTLPTNLGIAVGRDIDYSKIFDKEKNETFIIGTKRLNHYYKDDKTYTVIEQFKGEHIKGIEYEPVFDYFLSQRNKGAFRIHTAEYVTTDDGTGIVHIAPFGEEDYNILKKNTKTDMITPIDAECRFTNEVKDFEGLFVKDADNKIIEKLKSMNLLFKRENFLHRYPFCYRTNSPLIYRPISSWFVNIEAIKEKLIKSNEQINWIPSHLKKGRFGKWLENARDWAISRNRFWGNPIPVWICSKTGNKICIGSKEELERLSGQKVNDLHKDKIDKITWPSQYGGTYVRTSEVLDCWFESGSMPYASKHYPFKDKDKFHDIFPADFIAEGLDQTRGWFYTLTILGTALFEQTAFKNVIVNGLVLSSDGRKMSKSLRNYTDPMEVINTFGADALRLYLVMSPVVRADDLKYSDDGVKDVLKNIIIPIWNAYSFFITYAIIDKFEPNSNIVLYKTNILDKWIISEIESLKKTLNEEIDKYNLTKSIEELLAFIDKLNNWYIRRSRRRFWKSENDNDKIDAYETLYYALKNLMLMLAPFIPFLTEEIYQNLKTKDEKESIHLNEYPQEIKELINIDLEEKMNFIRKVVSIARALRASHNIKIRKPISTIYIVTKDQKEQQILSEMKEIILEEINSEEIKIKSNEEELVTYKAKANFRELGSKLGTNMKAVALEIMKLNNEDILKIINGNKHTIKIKDNTYDITLKDIILERHEKENLKVINEDSVTIGLDALITEELYLKGLSRELIRKVQNLRKENNFNVSDRIILYIDNNEILKKIISQFESYIKNETLTLKIEINNEKALTKVELDDEILIKIGIEKWSN</sequence>
<gene>
    <name evidence="1" type="primary">ileS</name>
    <name type="ordered locus">BH0833</name>
</gene>
<feature type="chain" id="PRO_1000216250" description="Isoleucine--tRNA ligase">
    <location>
        <begin position="1"/>
        <end position="1044"/>
    </location>
</feature>
<feature type="short sequence motif" description="'HIGH' region">
    <location>
        <begin position="48"/>
        <end position="58"/>
    </location>
</feature>
<feature type="short sequence motif" description="'KMSKS' region">
    <location>
        <begin position="594"/>
        <end position="598"/>
    </location>
</feature>
<feature type="binding site" evidence="1">
    <location>
        <position position="597"/>
    </location>
    <ligand>
        <name>ATP</name>
        <dbReference type="ChEBI" id="CHEBI:30616"/>
    </ligand>
</feature>
<evidence type="ECO:0000255" key="1">
    <source>
        <dbReference type="HAMAP-Rule" id="MF_02003"/>
    </source>
</evidence>
<keyword id="KW-0030">Aminoacyl-tRNA synthetase</keyword>
<keyword id="KW-0067">ATP-binding</keyword>
<keyword id="KW-0963">Cytoplasm</keyword>
<keyword id="KW-0436">Ligase</keyword>
<keyword id="KW-0479">Metal-binding</keyword>
<keyword id="KW-0547">Nucleotide-binding</keyword>
<keyword id="KW-0648">Protein biosynthesis</keyword>
<keyword id="KW-0862">Zinc</keyword>
<reference key="1">
    <citation type="submission" date="2004-12" db="EMBL/GenBank/DDBJ databases">
        <title>The genome sequence of Borrelia hermsii and Borrelia turicatae: comparative analysis of two agents of endemic N. America relapsing fever.</title>
        <authorList>
            <person name="Porcella S.F."/>
            <person name="Raffel S.J."/>
            <person name="Schrumpf M.E."/>
            <person name="Montgomery B."/>
            <person name="Smith T."/>
            <person name="Schwan T.G."/>
        </authorList>
    </citation>
    <scope>NUCLEOTIDE SEQUENCE [LARGE SCALE GENOMIC DNA]</scope>
    <source>
        <strain>HS1 / DAH</strain>
    </source>
</reference>
<comment type="function">
    <text evidence="1">Catalyzes the attachment of isoleucine to tRNA(Ile). As IleRS can inadvertently accommodate and process structurally similar amino acids such as valine, to avoid such errors it has two additional distinct tRNA(Ile)-dependent editing activities. One activity is designated as 'pretransfer' editing and involves the hydrolysis of activated Val-AMP. The other activity is designated 'posttransfer' editing and involves deacylation of mischarged Val-tRNA(Ile).</text>
</comment>
<comment type="catalytic activity">
    <reaction evidence="1">
        <text>tRNA(Ile) + L-isoleucine + ATP = L-isoleucyl-tRNA(Ile) + AMP + diphosphate</text>
        <dbReference type="Rhea" id="RHEA:11060"/>
        <dbReference type="Rhea" id="RHEA-COMP:9666"/>
        <dbReference type="Rhea" id="RHEA-COMP:9695"/>
        <dbReference type="ChEBI" id="CHEBI:30616"/>
        <dbReference type="ChEBI" id="CHEBI:33019"/>
        <dbReference type="ChEBI" id="CHEBI:58045"/>
        <dbReference type="ChEBI" id="CHEBI:78442"/>
        <dbReference type="ChEBI" id="CHEBI:78528"/>
        <dbReference type="ChEBI" id="CHEBI:456215"/>
        <dbReference type="EC" id="6.1.1.5"/>
    </reaction>
</comment>
<comment type="cofactor">
    <cofactor evidence="1">
        <name>Zn(2+)</name>
        <dbReference type="ChEBI" id="CHEBI:29105"/>
    </cofactor>
</comment>
<comment type="subunit">
    <text evidence="1">Monomer.</text>
</comment>
<comment type="subcellular location">
    <subcellularLocation>
        <location evidence="1">Cytoplasm</location>
    </subcellularLocation>
</comment>
<comment type="domain">
    <text evidence="1">IleRS has two distinct active sites: one for aminoacylation and one for editing. The misactivated valine is translocated from the active site to the editing site, which sterically excludes the correctly activated isoleucine. The single editing site contains two valyl binding pockets, one specific for each substrate (Val-AMP or Val-tRNA(Ile)).</text>
</comment>
<comment type="similarity">
    <text evidence="1">Belongs to the class-I aminoacyl-tRNA synthetase family. IleS type 2 subfamily.</text>
</comment>
<dbReference type="EC" id="6.1.1.5" evidence="1"/>
<dbReference type="EMBL" id="CP000048">
    <property type="protein sequence ID" value="AAX17330.1"/>
    <property type="molecule type" value="Genomic_DNA"/>
</dbReference>
<dbReference type="RefSeq" id="WP_012422580.1">
    <property type="nucleotide sequence ID" value="NZ_CP073136.1"/>
</dbReference>
<dbReference type="SMR" id="B2S1H8"/>
<dbReference type="GeneID" id="71843667"/>
<dbReference type="KEGG" id="bhr:BH0833"/>
<dbReference type="HOGENOM" id="CLU_001493_1_1_12"/>
<dbReference type="Proteomes" id="UP000008834">
    <property type="component" value="Chromosome"/>
</dbReference>
<dbReference type="GO" id="GO:0005737">
    <property type="term" value="C:cytoplasm"/>
    <property type="evidence" value="ECO:0007669"/>
    <property type="project" value="UniProtKB-SubCell"/>
</dbReference>
<dbReference type="GO" id="GO:0002161">
    <property type="term" value="F:aminoacyl-tRNA deacylase activity"/>
    <property type="evidence" value="ECO:0007669"/>
    <property type="project" value="InterPro"/>
</dbReference>
<dbReference type="GO" id="GO:0005524">
    <property type="term" value="F:ATP binding"/>
    <property type="evidence" value="ECO:0007669"/>
    <property type="project" value="UniProtKB-UniRule"/>
</dbReference>
<dbReference type="GO" id="GO:0004822">
    <property type="term" value="F:isoleucine-tRNA ligase activity"/>
    <property type="evidence" value="ECO:0007669"/>
    <property type="project" value="UniProtKB-UniRule"/>
</dbReference>
<dbReference type="GO" id="GO:0000049">
    <property type="term" value="F:tRNA binding"/>
    <property type="evidence" value="ECO:0007669"/>
    <property type="project" value="InterPro"/>
</dbReference>
<dbReference type="GO" id="GO:0008270">
    <property type="term" value="F:zinc ion binding"/>
    <property type="evidence" value="ECO:0007669"/>
    <property type="project" value="UniProtKB-UniRule"/>
</dbReference>
<dbReference type="GO" id="GO:0006428">
    <property type="term" value="P:isoleucyl-tRNA aminoacylation"/>
    <property type="evidence" value="ECO:0007669"/>
    <property type="project" value="UniProtKB-UniRule"/>
</dbReference>
<dbReference type="CDD" id="cd07961">
    <property type="entry name" value="Anticodon_Ia_Ile_ABEc"/>
    <property type="match status" value="1"/>
</dbReference>
<dbReference type="CDD" id="cd00818">
    <property type="entry name" value="IleRS_core"/>
    <property type="match status" value="1"/>
</dbReference>
<dbReference type="FunFam" id="3.40.50.620:FF:000063">
    <property type="entry name" value="Isoleucine--tRNA ligase"/>
    <property type="match status" value="1"/>
</dbReference>
<dbReference type="FunFam" id="3.40.50.620:FF:000133">
    <property type="entry name" value="Isoleucyl-tRNA synthetase, cytoplasmic"/>
    <property type="match status" value="1"/>
</dbReference>
<dbReference type="Gene3D" id="3.40.50.620">
    <property type="entry name" value="HUPs"/>
    <property type="match status" value="2"/>
</dbReference>
<dbReference type="Gene3D" id="1.10.730.10">
    <property type="entry name" value="Isoleucyl-tRNA Synthetase, Domain 1"/>
    <property type="match status" value="1"/>
</dbReference>
<dbReference type="HAMAP" id="MF_02003">
    <property type="entry name" value="Ile_tRNA_synth_type2"/>
    <property type="match status" value="1"/>
</dbReference>
<dbReference type="InterPro" id="IPR002300">
    <property type="entry name" value="aa-tRNA-synth_Ia"/>
</dbReference>
<dbReference type="InterPro" id="IPR033709">
    <property type="entry name" value="Anticodon_Ile_ABEc"/>
</dbReference>
<dbReference type="InterPro" id="IPR002301">
    <property type="entry name" value="Ile-tRNA-ligase"/>
</dbReference>
<dbReference type="InterPro" id="IPR023586">
    <property type="entry name" value="Ile-tRNA-ligase_type2"/>
</dbReference>
<dbReference type="InterPro" id="IPR013155">
    <property type="entry name" value="M/V/L/I-tRNA-synth_anticd-bd"/>
</dbReference>
<dbReference type="InterPro" id="IPR014729">
    <property type="entry name" value="Rossmann-like_a/b/a_fold"/>
</dbReference>
<dbReference type="InterPro" id="IPR009080">
    <property type="entry name" value="tRNAsynth_Ia_anticodon-bd"/>
</dbReference>
<dbReference type="InterPro" id="IPR009008">
    <property type="entry name" value="Val/Leu/Ile-tRNA-synth_edit"/>
</dbReference>
<dbReference type="NCBIfam" id="TIGR00392">
    <property type="entry name" value="ileS"/>
    <property type="match status" value="1"/>
</dbReference>
<dbReference type="PANTHER" id="PTHR42780:SF1">
    <property type="entry name" value="ISOLEUCINE--TRNA LIGASE, CYTOPLASMIC"/>
    <property type="match status" value="1"/>
</dbReference>
<dbReference type="PANTHER" id="PTHR42780">
    <property type="entry name" value="SOLEUCYL-TRNA SYNTHETASE"/>
    <property type="match status" value="1"/>
</dbReference>
<dbReference type="Pfam" id="PF08264">
    <property type="entry name" value="Anticodon_1"/>
    <property type="match status" value="1"/>
</dbReference>
<dbReference type="Pfam" id="PF19302">
    <property type="entry name" value="DUF5915"/>
    <property type="match status" value="1"/>
</dbReference>
<dbReference type="Pfam" id="PF00133">
    <property type="entry name" value="tRNA-synt_1"/>
    <property type="match status" value="1"/>
</dbReference>
<dbReference type="PRINTS" id="PR00984">
    <property type="entry name" value="TRNASYNTHILE"/>
</dbReference>
<dbReference type="SUPFAM" id="SSF47323">
    <property type="entry name" value="Anticodon-binding domain of a subclass of class I aminoacyl-tRNA synthetases"/>
    <property type="match status" value="2"/>
</dbReference>
<dbReference type="SUPFAM" id="SSF52374">
    <property type="entry name" value="Nucleotidylyl transferase"/>
    <property type="match status" value="1"/>
</dbReference>
<dbReference type="SUPFAM" id="SSF50677">
    <property type="entry name" value="ValRS/IleRS/LeuRS editing domain"/>
    <property type="match status" value="1"/>
</dbReference>
<name>SYI_BORHD</name>